<feature type="chain" id="PRO_0000453637" description="Variediene synthase">
    <location>
        <begin position="1"/>
        <end position="705"/>
    </location>
</feature>
<feature type="region of interest" description="Terpene cyclase" evidence="9">
    <location>
        <begin position="9"/>
        <end position="331"/>
    </location>
</feature>
<feature type="region of interest" description="Prenyltransferase" evidence="9">
    <location>
        <begin position="332"/>
        <end position="705"/>
    </location>
</feature>
<feature type="region of interest" description="Disordered" evidence="5">
    <location>
        <begin position="349"/>
        <end position="374"/>
    </location>
</feature>
<feature type="short sequence motif" description="DDXXD 1" evidence="9">
    <location>
        <begin position="100"/>
        <end position="104"/>
    </location>
</feature>
<feature type="short sequence motif" description="NSE/DTE" evidence="9">
    <location>
        <begin position="230"/>
        <end position="238"/>
    </location>
</feature>
<feature type="short sequence motif" description="DDXXD 2" evidence="9">
    <location>
        <begin position="463"/>
        <end position="467"/>
    </location>
</feature>
<feature type="compositionally biased region" description="Basic and acidic residues" evidence="5">
    <location>
        <begin position="349"/>
        <end position="366"/>
    </location>
</feature>
<feature type="binding site" evidence="4">
    <location>
        <position position="100"/>
    </location>
    <ligand>
        <name>Mg(2+)</name>
        <dbReference type="ChEBI" id="CHEBI:18420"/>
        <label>1</label>
    </ligand>
</feature>
<feature type="binding site" evidence="4">
    <location>
        <position position="100"/>
    </location>
    <ligand>
        <name>Mg(2+)</name>
        <dbReference type="ChEBI" id="CHEBI:18420"/>
        <label>2</label>
    </ligand>
</feature>
<feature type="binding site" evidence="1">
    <location>
        <position position="100"/>
    </location>
    <ligand>
        <name>substrate</name>
    </ligand>
</feature>
<feature type="binding site" evidence="1">
    <location>
        <begin position="186"/>
        <end position="189"/>
    </location>
    <ligand>
        <name>substrate</name>
    </ligand>
</feature>
<feature type="binding site" evidence="1">
    <location>
        <position position="230"/>
    </location>
    <ligand>
        <name>substrate</name>
    </ligand>
</feature>
<feature type="binding site" evidence="1">
    <location>
        <begin position="234"/>
        <end position="238"/>
    </location>
    <ligand>
        <name>substrate</name>
    </ligand>
</feature>
<feature type="binding site" evidence="1">
    <location>
        <begin position="325"/>
        <end position="326"/>
    </location>
    <ligand>
        <name>substrate</name>
    </ligand>
</feature>
<feature type="binding site" evidence="3">
    <location>
        <position position="424"/>
    </location>
    <ligand>
        <name>isopentenyl diphosphate</name>
        <dbReference type="ChEBI" id="CHEBI:128769"/>
    </ligand>
</feature>
<feature type="binding site" evidence="3">
    <location>
        <position position="427"/>
    </location>
    <ligand>
        <name>isopentenyl diphosphate</name>
        <dbReference type="ChEBI" id="CHEBI:128769"/>
    </ligand>
</feature>
<feature type="binding site" evidence="3">
    <location>
        <position position="456"/>
    </location>
    <ligand>
        <name>isopentenyl diphosphate</name>
        <dbReference type="ChEBI" id="CHEBI:128769"/>
    </ligand>
</feature>
<feature type="binding site" evidence="3">
    <location>
        <position position="463"/>
    </location>
    <ligand>
        <name>Mg(2+)</name>
        <dbReference type="ChEBI" id="CHEBI:18420"/>
        <label>3</label>
    </ligand>
</feature>
<feature type="binding site" evidence="3">
    <location>
        <position position="463"/>
    </location>
    <ligand>
        <name>Mg(2+)</name>
        <dbReference type="ChEBI" id="CHEBI:18420"/>
        <label>4</label>
    </ligand>
</feature>
<feature type="binding site" evidence="3">
    <location>
        <position position="467"/>
    </location>
    <ligand>
        <name>Mg(2+)</name>
        <dbReference type="ChEBI" id="CHEBI:18420"/>
        <label>3</label>
    </ligand>
</feature>
<feature type="binding site" evidence="3">
    <location>
        <position position="467"/>
    </location>
    <ligand>
        <name>Mg(2+)</name>
        <dbReference type="ChEBI" id="CHEBI:18420"/>
        <label>4</label>
    </ligand>
</feature>
<feature type="binding site" evidence="3">
    <location>
        <position position="472"/>
    </location>
    <ligand>
        <name>dimethylallyl diphosphate</name>
        <dbReference type="ChEBI" id="CHEBI:57623"/>
    </ligand>
</feature>
<feature type="binding site" evidence="3">
    <location>
        <position position="473"/>
    </location>
    <ligand>
        <name>isopentenyl diphosphate</name>
        <dbReference type="ChEBI" id="CHEBI:128769"/>
    </ligand>
</feature>
<feature type="binding site" evidence="3">
    <location>
        <position position="550"/>
    </location>
    <ligand>
        <name>dimethylallyl diphosphate</name>
        <dbReference type="ChEBI" id="CHEBI:57623"/>
    </ligand>
</feature>
<feature type="binding site" evidence="3">
    <location>
        <position position="551"/>
    </location>
    <ligand>
        <name>dimethylallyl diphosphate</name>
        <dbReference type="ChEBI" id="CHEBI:57623"/>
    </ligand>
</feature>
<feature type="binding site" evidence="3">
    <location>
        <position position="589"/>
    </location>
    <ligand>
        <name>dimethylallyl diphosphate</name>
        <dbReference type="ChEBI" id="CHEBI:57623"/>
    </ligand>
</feature>
<feature type="binding site" evidence="3">
    <location>
        <position position="596"/>
    </location>
    <ligand>
        <name>dimethylallyl diphosphate</name>
        <dbReference type="ChEBI" id="CHEBI:57623"/>
    </ligand>
</feature>
<feature type="binding site" evidence="3">
    <location>
        <position position="605"/>
    </location>
    <ligand>
        <name>dimethylallyl diphosphate</name>
        <dbReference type="ChEBI" id="CHEBI:57623"/>
    </ligand>
</feature>
<feature type="binding site" evidence="3">
    <location>
        <position position="615"/>
    </location>
    <ligand>
        <name>dimethylallyl diphosphate</name>
        <dbReference type="ChEBI" id="CHEBI:57623"/>
    </ligand>
</feature>
<accession>A0A0P0ZD79</accession>
<keyword id="KW-0414">Isoprene biosynthesis</keyword>
<keyword id="KW-0456">Lyase</keyword>
<keyword id="KW-0460">Magnesium</keyword>
<keyword id="KW-0479">Metal-binding</keyword>
<keyword id="KW-0511">Multifunctional enzyme</keyword>
<keyword id="KW-0677">Repeat</keyword>
<keyword id="KW-0808">Transferase</keyword>
<proteinExistence type="evidence at protein level"/>
<protein>
    <recommendedName>
        <fullName evidence="7">Variediene synthase</fullName>
        <shortName evidence="7">VS</shortName>
    </recommendedName>
    <domain>
        <recommendedName>
            <fullName evidence="7">Terpene cyclase</fullName>
            <ecNumber evidence="6">4.2.3.218</ecNumber>
            <ecNumber evidence="6">4.2.3.219</ecNumber>
        </recommendedName>
    </domain>
    <domain>
        <recommendedName>
            <fullName evidence="7">Geranylgeranyl diphosphate synthase</fullName>
            <shortName evidence="7">GGDP synthase</shortName>
            <shortName evidence="7">GGS</shortName>
            <ecNumber evidence="6">2.5.1.29</ecNumber>
        </recommendedName>
    </domain>
    <domain>
        <recommendedName>
            <fullName evidence="7">Geranylfarnesyl diphosphate synthase</fullName>
            <shortName evidence="7">GFDP synthase</shortName>
            <ecNumber evidence="6">2.5.1.81</ecNumber>
        </recommendedName>
    </domain>
</protein>
<evidence type="ECO:0000250" key="1">
    <source>
        <dbReference type="UniProtKB" id="A2PZA5"/>
    </source>
</evidence>
<evidence type="ECO:0000250" key="2">
    <source>
        <dbReference type="UniProtKB" id="P9WEV7"/>
    </source>
</evidence>
<evidence type="ECO:0000250" key="3">
    <source>
        <dbReference type="UniProtKB" id="Q12051"/>
    </source>
</evidence>
<evidence type="ECO:0000250" key="4">
    <source>
        <dbReference type="UniProtKB" id="Q40577"/>
    </source>
</evidence>
<evidence type="ECO:0000256" key="5">
    <source>
        <dbReference type="SAM" id="MobiDB-lite"/>
    </source>
</evidence>
<evidence type="ECO:0000269" key="6">
    <source>
    </source>
</evidence>
<evidence type="ECO:0000303" key="7">
    <source>
    </source>
</evidence>
<evidence type="ECO:0000305" key="8"/>
<evidence type="ECO:0000305" key="9">
    <source>
    </source>
</evidence>
<organism>
    <name type="scientific">Emericella variicolor</name>
    <name type="common">Aspergillus stellatus</name>
    <dbReference type="NCBI Taxonomy" id="1549217"/>
    <lineage>
        <taxon>Eukaryota</taxon>
        <taxon>Fungi</taxon>
        <taxon>Dikarya</taxon>
        <taxon>Ascomycota</taxon>
        <taxon>Pezizomycotina</taxon>
        <taxon>Eurotiomycetes</taxon>
        <taxon>Eurotiomycetidae</taxon>
        <taxon>Eurotiales</taxon>
        <taxon>Aspergillaceae</taxon>
        <taxon>Aspergillus</taxon>
        <taxon>Aspergillus subgen. Nidulantes</taxon>
    </lineage>
</organism>
<name>EVVS_EMEVA</name>
<dbReference type="EC" id="4.2.3.218" evidence="6"/>
<dbReference type="EC" id="4.2.3.219" evidence="6"/>
<dbReference type="EC" id="2.5.1.29" evidence="6"/>
<dbReference type="EC" id="2.5.1.81" evidence="6"/>
<dbReference type="EMBL" id="LC063849">
    <property type="protein sequence ID" value="BAT32888.1"/>
    <property type="molecule type" value="Genomic_DNA"/>
</dbReference>
<dbReference type="SMR" id="A0A0P0ZD79"/>
<dbReference type="KEGG" id="ag:BAT32888"/>
<dbReference type="UniPathway" id="UPA00213"/>
<dbReference type="GO" id="GO:0016829">
    <property type="term" value="F:lyase activity"/>
    <property type="evidence" value="ECO:0007669"/>
    <property type="project" value="UniProtKB-KW"/>
</dbReference>
<dbReference type="GO" id="GO:0046872">
    <property type="term" value="F:metal ion binding"/>
    <property type="evidence" value="ECO:0007669"/>
    <property type="project" value="UniProtKB-KW"/>
</dbReference>
<dbReference type="GO" id="GO:0004659">
    <property type="term" value="F:prenyltransferase activity"/>
    <property type="evidence" value="ECO:0007669"/>
    <property type="project" value="InterPro"/>
</dbReference>
<dbReference type="GO" id="GO:0046165">
    <property type="term" value="P:alcohol biosynthetic process"/>
    <property type="evidence" value="ECO:0007669"/>
    <property type="project" value="UniProtKB-ARBA"/>
</dbReference>
<dbReference type="GO" id="GO:0043386">
    <property type="term" value="P:mycotoxin biosynthetic process"/>
    <property type="evidence" value="ECO:0007669"/>
    <property type="project" value="UniProtKB-ARBA"/>
</dbReference>
<dbReference type="GO" id="GO:0016114">
    <property type="term" value="P:terpenoid biosynthetic process"/>
    <property type="evidence" value="ECO:0007669"/>
    <property type="project" value="UniProtKB-UniPathway"/>
</dbReference>
<dbReference type="CDD" id="cd00685">
    <property type="entry name" value="Trans_IPPS_HT"/>
    <property type="match status" value="1"/>
</dbReference>
<dbReference type="Gene3D" id="1.10.600.10">
    <property type="entry name" value="Farnesyl Diphosphate Synthase"/>
    <property type="match status" value="2"/>
</dbReference>
<dbReference type="InterPro" id="IPR008949">
    <property type="entry name" value="Isoprenoid_synthase_dom_sf"/>
</dbReference>
<dbReference type="InterPro" id="IPR000092">
    <property type="entry name" value="Polyprenyl_synt"/>
</dbReference>
<dbReference type="InterPro" id="IPR033749">
    <property type="entry name" value="Polyprenyl_synt_CS"/>
</dbReference>
<dbReference type="PANTHER" id="PTHR12001">
    <property type="entry name" value="GERANYLGERANYL PYROPHOSPHATE SYNTHASE"/>
    <property type="match status" value="1"/>
</dbReference>
<dbReference type="PANTHER" id="PTHR12001:SF72">
    <property type="entry name" value="THIJ_PFPI FAMILY PROTEIN (AFU_ORTHOLOGUE AFUA_3G01210)-RELATED"/>
    <property type="match status" value="1"/>
</dbReference>
<dbReference type="Pfam" id="PF00348">
    <property type="entry name" value="polyprenyl_synt"/>
    <property type="match status" value="1"/>
</dbReference>
<dbReference type="Pfam" id="PF19086">
    <property type="entry name" value="Terpene_syn_C_2"/>
    <property type="match status" value="1"/>
</dbReference>
<dbReference type="SFLD" id="SFLDS00005">
    <property type="entry name" value="Isoprenoid_Synthase_Type_I"/>
    <property type="match status" value="1"/>
</dbReference>
<dbReference type="SUPFAM" id="SSF48576">
    <property type="entry name" value="Terpenoid synthases"/>
    <property type="match status" value="2"/>
</dbReference>
<dbReference type="PROSITE" id="PS00723">
    <property type="entry name" value="POLYPRENYL_SYNTHASE_1"/>
    <property type="match status" value="1"/>
</dbReference>
<dbReference type="PROSITE" id="PS00444">
    <property type="entry name" value="POLYPRENYL_SYNTHASE_2"/>
    <property type="match status" value="1"/>
</dbReference>
<gene>
    <name evidence="7" type="primary">EvVS</name>
</gene>
<reference key="1">
    <citation type="journal article" date="2016" name="Angew. Chem. Int. Ed.">
        <title>An unusual chimeric diterpene synthase from Emericella variecolor and its functional conversion into a sesterterpene synthase by domain swapping.</title>
        <authorList>
            <person name="Qin B."/>
            <person name="Matsuda Y."/>
            <person name="Mori T."/>
            <person name="Okada M."/>
            <person name="Quan Z."/>
            <person name="Mitsuhashi T."/>
            <person name="Wakimoto T."/>
            <person name="Abe I."/>
        </authorList>
    </citation>
    <scope>NUCLEOTIDE SEQUENCE [GENOMIC DNA]</scope>
    <scope>FUNCTION</scope>
    <scope>CATALYTIC ACTIVITY</scope>
    <scope>DOMAIN</scope>
    <scope>PATHWAY</scope>
    <source>
        <strain>ATCC 12069 / CBS 136.55 / IMI 60316 / NBRC 32302</strain>
    </source>
</reference>
<comment type="function">
    <text evidence="6">Bifunctional terpene synthase that converts dimethylallyl diphosphate (DMAPP) and isopentenyl diphosphate (IPP) into variediene as a single product (PubMed:26546087). The C-terminal prenyltransferase (PT) domain of EvVS catalyzes formation of geranylgeranyl pyrophosphate (GGPP), whereas the N-terminal terpene cyclase (TC) domain catalyzes the cyclization of GGPP to variediene (PubMed:26546087). The PT domain can also synthesize geranylfarnesyl pyrophosphate (GFPP) from the C5 isoprene units in vitro, while the TC domain is able to cyclize GFPP to the sesterterpene (2E)-alpha-cericerene (PubMed:26546087).</text>
</comment>
<comment type="catalytic activity">
    <reaction evidence="6">
        <text>isopentenyl diphosphate + (2E,6E)-farnesyl diphosphate = (2E,6E,10E)-geranylgeranyl diphosphate + diphosphate</text>
        <dbReference type="Rhea" id="RHEA:17653"/>
        <dbReference type="ChEBI" id="CHEBI:33019"/>
        <dbReference type="ChEBI" id="CHEBI:58756"/>
        <dbReference type="ChEBI" id="CHEBI:128769"/>
        <dbReference type="ChEBI" id="CHEBI:175763"/>
        <dbReference type="EC" id="2.5.1.29"/>
    </reaction>
    <physiologicalReaction direction="left-to-right" evidence="6">
        <dbReference type="Rhea" id="RHEA:17654"/>
    </physiologicalReaction>
</comment>
<comment type="catalytic activity">
    <reaction evidence="6">
        <text>isopentenyl diphosphate + (2E,6E,10E)-geranylgeranyl diphosphate = (2E,6E,10E,14E)-geranylfarnesyl diphosphate + diphosphate</text>
        <dbReference type="Rhea" id="RHEA:25694"/>
        <dbReference type="ChEBI" id="CHEBI:33019"/>
        <dbReference type="ChEBI" id="CHEBI:57907"/>
        <dbReference type="ChEBI" id="CHEBI:58756"/>
        <dbReference type="ChEBI" id="CHEBI:128769"/>
        <dbReference type="EC" id="2.5.1.81"/>
    </reaction>
    <physiologicalReaction direction="left-to-right" evidence="6">
        <dbReference type="Rhea" id="RHEA:25695"/>
    </physiologicalReaction>
</comment>
<comment type="catalytic activity">
    <reaction evidence="6">
        <text>(2E,6E,10E)-geranylgeranyl diphosphate = variediene + diphosphate</text>
        <dbReference type="Rhea" id="RHEA:78287"/>
        <dbReference type="ChEBI" id="CHEBI:33019"/>
        <dbReference type="ChEBI" id="CHEBI:58756"/>
        <dbReference type="ChEBI" id="CHEBI:177888"/>
        <dbReference type="EC" id="4.2.3.218"/>
    </reaction>
    <physiologicalReaction direction="left-to-right" evidence="6">
        <dbReference type="Rhea" id="RHEA:78288"/>
    </physiologicalReaction>
</comment>
<comment type="catalytic activity">
    <reaction evidence="6">
        <text>(2E,6E,10E,14E)-geranylfarnesyl diphosphate = (R,2E)-alpha-cericerene + diphosphate</text>
        <dbReference type="Rhea" id="RHEA:78291"/>
        <dbReference type="ChEBI" id="CHEBI:33019"/>
        <dbReference type="ChEBI" id="CHEBI:57907"/>
        <dbReference type="ChEBI" id="CHEBI:228261"/>
        <dbReference type="EC" id="4.2.3.219"/>
    </reaction>
    <physiologicalReaction direction="left-to-right" evidence="6">
        <dbReference type="Rhea" id="RHEA:78292"/>
    </physiologicalReaction>
</comment>
<comment type="cofactor">
    <cofactor evidence="2">
        <name>Mg(2+)</name>
        <dbReference type="ChEBI" id="CHEBI:18420"/>
    </cofactor>
</comment>
<comment type="pathway">
    <text evidence="6">Secondary metabolite biosynthesis; terpenoid biosynthesis.</text>
</comment>
<comment type="subunit">
    <text evidence="1">Hexamer.</text>
</comment>
<comment type="domain">
    <text evidence="9">The conserved DDXXD motifs as well as the NSE/DTE motif are important for the catalytic activity, presumably through binding to Mg(2+).</text>
</comment>
<comment type="similarity">
    <text evidence="8">In the N-terminal section; belongs to the terpene synthase family.</text>
</comment>
<comment type="similarity">
    <text evidence="8">In the C-terminal section; belongs to the FPP/GGPP synthase family.</text>
</comment>
<sequence>MSQSSDFILNSTLSSVVERSTPDIAGFCSGYELRRHHHEHLANEGSLRCRTDWEQFIGPIERWGSCNPWEGHFGAVVLPFCKPERLAVICYIFEYAFLYDNVVESAAKSTLNLNTDNIALDETEYRTVRSILGTKQIQSKMLLELLSIDAPRAEVVINSWKEMISTTAKKDKTRAFNNLEEYVDYRIIDTGAPFVDMLMRFGMGIMLTQEEQKRIEPIVKPCYAALGLANDYFSFDIEWEEFQAESDKTTMTNAVWLFMQWENLNAEQAKRRVQEVTKQYEQQYLRNIADFAAGEGKENIKLQTYLKAQGYQVPGNVAWSLRCPRYHPWLCKEAASLLHQDTIQELEAGRKPQALEEYRSRSHSESDLSDASPTFWSGSCRSSARSSVSSAFGPPDKDISITPAILGDEHLLGPAEYISSLPSKGVREAFIDGLNVWLVLPDHRVNQLKSIAQTLHNASLMLDDIEDHSPLRRGRPSTHMIFGTEQTINSANFLLIDVMEKVRQLDDPRCMDIYLEEMRNLFIGQSFDLYWTRNGECPSEEQYLDMIRQKTGGLFRLLTRMMVQIAPVQQKGLETQLASLSDVLGEFFQVRDDYKNLTEEYTGQKGFCEDLDECKFSYPLIHALTSQPKNVQLRGILQQSRSAGGLDVPLKETVLSHLRQAGSIEYTEAKMGELMEKITDSVVSLEGETGSPNWVVRLLIHRLKV</sequence>